<evidence type="ECO:0000255" key="1">
    <source>
        <dbReference type="HAMAP-Rule" id="MF_00068"/>
    </source>
</evidence>
<feature type="chain" id="PRO_0000249628" description="N-acetylmuramic acid 6-phosphate etherase">
    <location>
        <begin position="1"/>
        <end position="316"/>
    </location>
</feature>
<feature type="domain" description="SIS" evidence="1">
    <location>
        <begin position="66"/>
        <end position="229"/>
    </location>
</feature>
<feature type="active site" description="Proton donor" evidence="1">
    <location>
        <position position="94"/>
    </location>
</feature>
<feature type="active site" evidence="1">
    <location>
        <position position="125"/>
    </location>
</feature>
<keyword id="KW-0119">Carbohydrate metabolism</keyword>
<keyword id="KW-0456">Lyase</keyword>
<keyword id="KW-1185">Reference proteome</keyword>
<accession>Q28KP2</accession>
<comment type="function">
    <text evidence="1">Specifically catalyzes the cleavage of the D-lactyl ether substituent of MurNAc 6-phosphate, producing GlcNAc 6-phosphate and D-lactate. Together with AnmK, is also required for the utilization of anhydro-N-acetylmuramic acid (anhMurNAc) either imported from the medium or derived from its own cell wall murein, and thus plays a role in cell wall recycling.</text>
</comment>
<comment type="catalytic activity">
    <reaction evidence="1">
        <text>N-acetyl-D-muramate 6-phosphate + H2O = N-acetyl-D-glucosamine 6-phosphate + (R)-lactate</text>
        <dbReference type="Rhea" id="RHEA:26410"/>
        <dbReference type="ChEBI" id="CHEBI:15377"/>
        <dbReference type="ChEBI" id="CHEBI:16004"/>
        <dbReference type="ChEBI" id="CHEBI:57513"/>
        <dbReference type="ChEBI" id="CHEBI:58722"/>
        <dbReference type="EC" id="4.2.1.126"/>
    </reaction>
</comment>
<comment type="pathway">
    <text evidence="1">Amino-sugar metabolism; 1,6-anhydro-N-acetylmuramate degradation.</text>
</comment>
<comment type="pathway">
    <text evidence="1">Amino-sugar metabolism; N-acetylmuramate degradation.</text>
</comment>
<comment type="pathway">
    <text evidence="1">Cell wall biogenesis; peptidoglycan recycling.</text>
</comment>
<comment type="subunit">
    <text evidence="1">Homodimer.</text>
</comment>
<comment type="miscellaneous">
    <text evidence="1">A lyase-type mechanism (elimination/hydration) is suggested for the cleavage of the lactyl ether bond of MurNAc 6-phosphate, with the formation of an alpha,beta-unsaturated aldehyde intermediate with (E)-stereochemistry, followed by the syn addition of water to give product.</text>
</comment>
<comment type="similarity">
    <text evidence="1">Belongs to the GCKR-like family. MurNAc-6-P etherase subfamily.</text>
</comment>
<sequence length="316" mass="32510">MGVAAVFTAVQSDLGALVSEASNSRSADIDLMTTAQILACMNAEDRKIADAVAAELPAIAQTVDRIVAAIGRGGRLIYIGAGTSGRLGVLDASECPPTFSVPPGMVVGLIAGGDTALRTSVEAAEDDEATGAEDVKAIGLTTKDVVIGIAVSGRTPFVMGAIDYARRIGAFTAALTCNPGSPMADLADIAISPVVGPEVVTGSTRLKSGTAQKMILNMLSTASMIRLGKTWGNRMVDVTISNRKLADRATAMLRDATGCSADDARTLLDQSNGSVKLAILMQITGCDADAARANLEAENGFLRKAIERAEKTPPQS</sequence>
<dbReference type="EC" id="4.2.1.126" evidence="1"/>
<dbReference type="EMBL" id="CP000264">
    <property type="protein sequence ID" value="ABD56720.1"/>
    <property type="molecule type" value="Genomic_DNA"/>
</dbReference>
<dbReference type="RefSeq" id="WP_011456917.1">
    <property type="nucleotide sequence ID" value="NC_007802.1"/>
</dbReference>
<dbReference type="SMR" id="Q28KP2"/>
<dbReference type="STRING" id="290400.Jann_3803"/>
<dbReference type="KEGG" id="jan:Jann_3803"/>
<dbReference type="eggNOG" id="COG2103">
    <property type="taxonomic scope" value="Bacteria"/>
</dbReference>
<dbReference type="HOGENOM" id="CLU_049049_1_1_5"/>
<dbReference type="OrthoDB" id="9813395at2"/>
<dbReference type="UniPathway" id="UPA00342"/>
<dbReference type="UniPathway" id="UPA00343"/>
<dbReference type="UniPathway" id="UPA00544"/>
<dbReference type="Proteomes" id="UP000008326">
    <property type="component" value="Chromosome"/>
</dbReference>
<dbReference type="GO" id="GO:0097367">
    <property type="term" value="F:carbohydrate derivative binding"/>
    <property type="evidence" value="ECO:0007669"/>
    <property type="project" value="InterPro"/>
</dbReference>
<dbReference type="GO" id="GO:0016835">
    <property type="term" value="F:carbon-oxygen lyase activity"/>
    <property type="evidence" value="ECO:0007669"/>
    <property type="project" value="UniProtKB-UniRule"/>
</dbReference>
<dbReference type="GO" id="GO:0016803">
    <property type="term" value="F:ether hydrolase activity"/>
    <property type="evidence" value="ECO:0007669"/>
    <property type="project" value="TreeGrafter"/>
</dbReference>
<dbReference type="GO" id="GO:0097175">
    <property type="term" value="P:1,6-anhydro-N-acetyl-beta-muramic acid catabolic process"/>
    <property type="evidence" value="ECO:0007669"/>
    <property type="project" value="UniProtKB-UniRule"/>
</dbReference>
<dbReference type="GO" id="GO:0046348">
    <property type="term" value="P:amino sugar catabolic process"/>
    <property type="evidence" value="ECO:0007669"/>
    <property type="project" value="InterPro"/>
</dbReference>
<dbReference type="GO" id="GO:0097173">
    <property type="term" value="P:N-acetylmuramic acid catabolic process"/>
    <property type="evidence" value="ECO:0007669"/>
    <property type="project" value="UniProtKB-UniPathway"/>
</dbReference>
<dbReference type="GO" id="GO:0009254">
    <property type="term" value="P:peptidoglycan turnover"/>
    <property type="evidence" value="ECO:0007669"/>
    <property type="project" value="UniProtKB-UniRule"/>
</dbReference>
<dbReference type="CDD" id="cd05007">
    <property type="entry name" value="SIS_Etherase"/>
    <property type="match status" value="1"/>
</dbReference>
<dbReference type="FunFam" id="1.10.8.1080:FF:000001">
    <property type="entry name" value="N-acetylmuramic acid 6-phosphate etherase"/>
    <property type="match status" value="1"/>
</dbReference>
<dbReference type="FunFam" id="3.40.50.10490:FF:000014">
    <property type="entry name" value="N-acetylmuramic acid 6-phosphate etherase"/>
    <property type="match status" value="1"/>
</dbReference>
<dbReference type="Gene3D" id="1.10.8.1080">
    <property type="match status" value="1"/>
</dbReference>
<dbReference type="Gene3D" id="3.40.50.10490">
    <property type="entry name" value="Glucose-6-phosphate isomerase like protein, domain 1"/>
    <property type="match status" value="1"/>
</dbReference>
<dbReference type="HAMAP" id="MF_00068">
    <property type="entry name" value="MurQ"/>
    <property type="match status" value="1"/>
</dbReference>
<dbReference type="InterPro" id="IPR005488">
    <property type="entry name" value="Etherase_MurQ"/>
</dbReference>
<dbReference type="InterPro" id="IPR005486">
    <property type="entry name" value="Glucokinase_regulatory_CS"/>
</dbReference>
<dbReference type="InterPro" id="IPR040190">
    <property type="entry name" value="MURQ/GCKR"/>
</dbReference>
<dbReference type="InterPro" id="IPR001347">
    <property type="entry name" value="SIS_dom"/>
</dbReference>
<dbReference type="InterPro" id="IPR046348">
    <property type="entry name" value="SIS_dom_sf"/>
</dbReference>
<dbReference type="NCBIfam" id="TIGR00274">
    <property type="entry name" value="N-acetylmuramic acid 6-phosphate etherase"/>
    <property type="match status" value="1"/>
</dbReference>
<dbReference type="NCBIfam" id="NF003915">
    <property type="entry name" value="PRK05441.1"/>
    <property type="match status" value="1"/>
</dbReference>
<dbReference type="NCBIfam" id="NF009222">
    <property type="entry name" value="PRK12570.1"/>
    <property type="match status" value="1"/>
</dbReference>
<dbReference type="PANTHER" id="PTHR10088">
    <property type="entry name" value="GLUCOKINASE REGULATORY PROTEIN"/>
    <property type="match status" value="1"/>
</dbReference>
<dbReference type="PANTHER" id="PTHR10088:SF4">
    <property type="entry name" value="GLUCOKINASE REGULATORY PROTEIN"/>
    <property type="match status" value="1"/>
</dbReference>
<dbReference type="Pfam" id="PF20741">
    <property type="entry name" value="GKRP-like_C"/>
    <property type="match status" value="1"/>
</dbReference>
<dbReference type="Pfam" id="PF22645">
    <property type="entry name" value="GKRP_SIS_N"/>
    <property type="match status" value="1"/>
</dbReference>
<dbReference type="SUPFAM" id="SSF53697">
    <property type="entry name" value="SIS domain"/>
    <property type="match status" value="1"/>
</dbReference>
<dbReference type="PROSITE" id="PS01272">
    <property type="entry name" value="GCKR"/>
    <property type="match status" value="1"/>
</dbReference>
<dbReference type="PROSITE" id="PS51464">
    <property type="entry name" value="SIS"/>
    <property type="match status" value="1"/>
</dbReference>
<gene>
    <name evidence="1" type="primary">murQ</name>
    <name type="ordered locus">Jann_3803</name>
</gene>
<name>MURQ_JANSC</name>
<proteinExistence type="inferred from homology"/>
<protein>
    <recommendedName>
        <fullName evidence="1">N-acetylmuramic acid 6-phosphate etherase</fullName>
        <shortName evidence="1">MurNAc-6-P etherase</shortName>
        <ecNumber evidence="1">4.2.1.126</ecNumber>
    </recommendedName>
    <alternativeName>
        <fullName evidence="1">N-acetylmuramic acid 6-phosphate hydrolase</fullName>
    </alternativeName>
    <alternativeName>
        <fullName evidence="1">N-acetylmuramic acid 6-phosphate lyase</fullName>
    </alternativeName>
</protein>
<organism>
    <name type="scientific">Jannaschia sp. (strain CCS1)</name>
    <dbReference type="NCBI Taxonomy" id="290400"/>
    <lineage>
        <taxon>Bacteria</taxon>
        <taxon>Pseudomonadati</taxon>
        <taxon>Pseudomonadota</taxon>
        <taxon>Alphaproteobacteria</taxon>
        <taxon>Rhodobacterales</taxon>
        <taxon>Roseobacteraceae</taxon>
        <taxon>Jannaschia</taxon>
    </lineage>
</organism>
<reference key="1">
    <citation type="submission" date="2006-02" db="EMBL/GenBank/DDBJ databases">
        <title>Complete sequence of chromosome of Jannaschia sp. CCS1.</title>
        <authorList>
            <consortium name="US DOE Joint Genome Institute"/>
            <person name="Copeland A."/>
            <person name="Lucas S."/>
            <person name="Lapidus A."/>
            <person name="Barry K."/>
            <person name="Detter J.C."/>
            <person name="Glavina del Rio T."/>
            <person name="Hammon N."/>
            <person name="Israni S."/>
            <person name="Pitluck S."/>
            <person name="Brettin T."/>
            <person name="Bruce D."/>
            <person name="Han C."/>
            <person name="Tapia R."/>
            <person name="Gilna P."/>
            <person name="Chertkov O."/>
            <person name="Saunders E."/>
            <person name="Schmutz J."/>
            <person name="Larimer F."/>
            <person name="Land M."/>
            <person name="Kyrpides N."/>
            <person name="Lykidis A."/>
            <person name="Moran M.A."/>
            <person name="Belas R."/>
            <person name="Ye W."/>
            <person name="Buchan A."/>
            <person name="Gonzalez J.M."/>
            <person name="Schell M.A."/>
            <person name="Richardson P."/>
        </authorList>
    </citation>
    <scope>NUCLEOTIDE SEQUENCE [LARGE SCALE GENOMIC DNA]</scope>
    <source>
        <strain>CCS1</strain>
    </source>
</reference>